<name>NS2_MPRVN</name>
<dbReference type="EMBL" id="DQ126108">
    <property type="protein sequence ID" value="AAZ94048.1"/>
    <property type="molecule type" value="Genomic_RNA"/>
</dbReference>
<dbReference type="RefSeq" id="YP_654551.1">
    <property type="nucleotide sequence ID" value="NC_008178.1"/>
</dbReference>
<dbReference type="KEGG" id="vg:5076670"/>
<dbReference type="Proteomes" id="UP000000349">
    <property type="component" value="Genome"/>
</dbReference>
<sequence>MSDTNEENRDEPTVVIVGPNDAQTETTDSTVNVETSSDADKNRVALEANINAQVVAMDEDQYYDQLELRANEVAADAEIYEAPDQPANYRNSGIIDLYDEAKDFLDSSATPQWNDKFWGLIDMGGHCNAGANAIFRTVIKALLYKKYYGAFPIIGDEYDSNKQDMVGSSKDSFYTILGLRNNDKPGKLTHIEAAILDMCTNLVCSQRNPKVWFFVSDAQVGRFMLDFQKHMEVRYGQNAHGSISIFTGPIPLRERNYGQNEGSLDLYEVAQVLQCVQNAETDHQVYQLATSPNQLYFKTRVAVKDGQDVIKHVPVEGGLYVKTYAPEFKHPEKLDGQYVEPRYEGNEIGKDVEYTLMDPTTDYHRVGASRVKRYGDTLMEYTETIPRPECGLIVLLNQCYYFAKARLNPFALLEMRLRSRGGAANRIVSRWLEKGEPLMAHDVVQTLENVVLDGAMQN</sequence>
<accession>Q1I0U4</accession>
<proteinExistence type="predicted"/>
<reference key="1">
    <citation type="journal article" date="2006" name="J. Gen. Virol.">
        <title>Micromonas pusilla reovirus: a new member of the family Reoviridae assigned to a novel proposed genus (Mimoreovirus).</title>
        <authorList>
            <person name="Attoui H."/>
            <person name="Jaafar F.M."/>
            <person name="Belhouchet M."/>
            <person name="de Micco P."/>
            <person name="de Lamballerie X."/>
            <person name="Brussaard C.P."/>
        </authorList>
    </citation>
    <scope>NUCLEOTIDE SEQUENCE [GENOMIC RNA]</scope>
</reference>
<organismHost>
    <name type="scientific">Micromonas pusilla</name>
    <name type="common">Picoplanktonic green alga</name>
    <name type="synonym">Chromulina pusilla</name>
    <dbReference type="NCBI Taxonomy" id="38833"/>
</organismHost>
<protein>
    <recommendedName>
        <fullName>Putative non-structural protein 2</fullName>
        <shortName>NS2</shortName>
    </recommendedName>
</protein>
<feature type="chain" id="PRO_0000404159" description="Putative non-structural protein 2">
    <location>
        <begin position="1"/>
        <end position="458"/>
    </location>
</feature>
<feature type="region of interest" description="Disordered" evidence="1">
    <location>
        <begin position="1"/>
        <end position="27"/>
    </location>
</feature>
<feature type="compositionally biased region" description="Basic and acidic residues" evidence="1">
    <location>
        <begin position="1"/>
        <end position="12"/>
    </location>
</feature>
<gene>
    <name type="primary">S8</name>
</gene>
<organism>
    <name type="scientific">Micromonas pusilla reovirus (isolate Netherlands/2005)</name>
    <name type="common">MpRV</name>
    <dbReference type="NCBI Taxonomy" id="649596"/>
    <lineage>
        <taxon>Viruses</taxon>
        <taxon>Riboviria</taxon>
        <taxon>Orthornavirae</taxon>
        <taxon>Duplornaviricota</taxon>
        <taxon>Resentoviricetes</taxon>
        <taxon>Reovirales</taxon>
        <taxon>Sedoreoviridae</taxon>
        <taxon>Mimoreovirus</taxon>
        <taxon>Micromonas pusilla reovirus</taxon>
    </lineage>
</organism>
<evidence type="ECO:0000256" key="1">
    <source>
        <dbReference type="SAM" id="MobiDB-lite"/>
    </source>
</evidence>
<keyword id="KW-1185">Reference proteome</keyword>